<proteinExistence type="inferred from homology"/>
<feature type="chain" id="PRO_1000212538" description="Co-chaperone protein HscB homolog">
    <location>
        <begin position="1"/>
        <end position="173"/>
    </location>
</feature>
<feature type="domain" description="J" evidence="1">
    <location>
        <begin position="5"/>
        <end position="77"/>
    </location>
</feature>
<organism>
    <name type="scientific">Azotobacter vinelandii (strain DJ / ATCC BAA-1303)</name>
    <dbReference type="NCBI Taxonomy" id="322710"/>
    <lineage>
        <taxon>Bacteria</taxon>
        <taxon>Pseudomonadati</taxon>
        <taxon>Pseudomonadota</taxon>
        <taxon>Gammaproteobacteria</taxon>
        <taxon>Pseudomonadales</taxon>
        <taxon>Pseudomonadaceae</taxon>
        <taxon>Azotobacter</taxon>
    </lineage>
</organism>
<protein>
    <recommendedName>
        <fullName evidence="1">Co-chaperone protein HscB homolog</fullName>
    </recommendedName>
</protein>
<keyword id="KW-0143">Chaperone</keyword>
<accession>C1DE65</accession>
<gene>
    <name evidence="1" type="primary">hscB</name>
    <name type="ordered locus">Avin_40370</name>
</gene>
<sequence length="173" mass="20407">MGNASHFALFDLEPDFRLDQDRLAVRYRELVRRVHPDRFAGAPEREQRLALEEAARLNEAYQTLKSPSQRARYLLSLQGEELSQETTVQDPAFLMQQMELREELQELQDSADLAGVARFKRRLVQDQEQLNEGFAACWADPRRRDEAERLARRMQFLDKLFAEVRQLEERLDD</sequence>
<comment type="function">
    <text evidence="1">Co-chaperone involved in the maturation of iron-sulfur cluster-containing proteins. Seems to help targeting proteins to be folded toward HscA.</text>
</comment>
<comment type="subunit">
    <text evidence="1">Interacts with HscA and stimulates its ATPase activity.</text>
</comment>
<comment type="similarity">
    <text evidence="1">Belongs to the HscB family.</text>
</comment>
<evidence type="ECO:0000255" key="1">
    <source>
        <dbReference type="HAMAP-Rule" id="MF_00682"/>
    </source>
</evidence>
<name>HSCB_AZOVD</name>
<reference key="1">
    <citation type="journal article" date="2009" name="J. Bacteriol.">
        <title>Genome sequence of Azotobacter vinelandii, an obligate aerobe specialized to support diverse anaerobic metabolic processes.</title>
        <authorList>
            <person name="Setubal J.C."/>
            <person name="Dos Santos P."/>
            <person name="Goldman B.S."/>
            <person name="Ertesvaag H."/>
            <person name="Espin G."/>
            <person name="Rubio L.M."/>
            <person name="Valla S."/>
            <person name="Almeida N.F."/>
            <person name="Balasubramanian D."/>
            <person name="Cromes L."/>
            <person name="Curatti L."/>
            <person name="Du Z."/>
            <person name="Godsy E."/>
            <person name="Goodner B."/>
            <person name="Hellner-Burris K."/>
            <person name="Hernandez J.A."/>
            <person name="Houmiel K."/>
            <person name="Imperial J."/>
            <person name="Kennedy C."/>
            <person name="Larson T.J."/>
            <person name="Latreille P."/>
            <person name="Ligon L.S."/>
            <person name="Lu J."/>
            <person name="Maerk M."/>
            <person name="Miller N.M."/>
            <person name="Norton S."/>
            <person name="O'Carroll I.P."/>
            <person name="Paulsen I."/>
            <person name="Raulfs E.C."/>
            <person name="Roemer R."/>
            <person name="Rosser J."/>
            <person name="Segura D."/>
            <person name="Slater S."/>
            <person name="Stricklin S.L."/>
            <person name="Studholme D.J."/>
            <person name="Sun J."/>
            <person name="Viana C.J."/>
            <person name="Wallin E."/>
            <person name="Wang B."/>
            <person name="Wheeler C."/>
            <person name="Zhu H."/>
            <person name="Dean D.R."/>
            <person name="Dixon R."/>
            <person name="Wood D."/>
        </authorList>
    </citation>
    <scope>NUCLEOTIDE SEQUENCE [LARGE SCALE GENOMIC DNA]</scope>
    <source>
        <strain>DJ / ATCC BAA-1303</strain>
    </source>
</reference>
<dbReference type="EMBL" id="CP001157">
    <property type="protein sequence ID" value="ACO80173.1"/>
    <property type="molecule type" value="Genomic_DNA"/>
</dbReference>
<dbReference type="RefSeq" id="WP_012702548.1">
    <property type="nucleotide sequence ID" value="NC_012560.1"/>
</dbReference>
<dbReference type="SMR" id="C1DE65"/>
<dbReference type="STRING" id="322710.Avin_40370"/>
<dbReference type="EnsemblBacteria" id="ACO80173">
    <property type="protein sequence ID" value="ACO80173"/>
    <property type="gene ID" value="Avin_40370"/>
</dbReference>
<dbReference type="GeneID" id="88186980"/>
<dbReference type="KEGG" id="avn:Avin_40370"/>
<dbReference type="eggNOG" id="COG1076">
    <property type="taxonomic scope" value="Bacteria"/>
</dbReference>
<dbReference type="HOGENOM" id="CLU_068529_2_0_6"/>
<dbReference type="OrthoDB" id="287587at2"/>
<dbReference type="Proteomes" id="UP000002424">
    <property type="component" value="Chromosome"/>
</dbReference>
<dbReference type="GO" id="GO:1990230">
    <property type="term" value="C:iron-sulfur cluster transfer complex"/>
    <property type="evidence" value="ECO:0007669"/>
    <property type="project" value="TreeGrafter"/>
</dbReference>
<dbReference type="GO" id="GO:0001671">
    <property type="term" value="F:ATPase activator activity"/>
    <property type="evidence" value="ECO:0007669"/>
    <property type="project" value="InterPro"/>
</dbReference>
<dbReference type="GO" id="GO:0051087">
    <property type="term" value="F:protein-folding chaperone binding"/>
    <property type="evidence" value="ECO:0007669"/>
    <property type="project" value="InterPro"/>
</dbReference>
<dbReference type="GO" id="GO:0044571">
    <property type="term" value="P:[2Fe-2S] cluster assembly"/>
    <property type="evidence" value="ECO:0007669"/>
    <property type="project" value="InterPro"/>
</dbReference>
<dbReference type="GO" id="GO:0051259">
    <property type="term" value="P:protein complex oligomerization"/>
    <property type="evidence" value="ECO:0007669"/>
    <property type="project" value="InterPro"/>
</dbReference>
<dbReference type="GO" id="GO:0006457">
    <property type="term" value="P:protein folding"/>
    <property type="evidence" value="ECO:0007669"/>
    <property type="project" value="UniProtKB-UniRule"/>
</dbReference>
<dbReference type="CDD" id="cd06257">
    <property type="entry name" value="DnaJ"/>
    <property type="match status" value="1"/>
</dbReference>
<dbReference type="Gene3D" id="1.10.287.110">
    <property type="entry name" value="DnaJ domain"/>
    <property type="match status" value="1"/>
</dbReference>
<dbReference type="Gene3D" id="1.20.1280.20">
    <property type="entry name" value="HscB, C-terminal domain"/>
    <property type="match status" value="1"/>
</dbReference>
<dbReference type="HAMAP" id="MF_00682">
    <property type="entry name" value="HscB"/>
    <property type="match status" value="1"/>
</dbReference>
<dbReference type="InterPro" id="IPR001623">
    <property type="entry name" value="DnaJ_domain"/>
</dbReference>
<dbReference type="InterPro" id="IPR004640">
    <property type="entry name" value="HscB"/>
</dbReference>
<dbReference type="InterPro" id="IPR036386">
    <property type="entry name" value="HscB_C_sf"/>
</dbReference>
<dbReference type="InterPro" id="IPR009073">
    <property type="entry name" value="HscB_oligo_C"/>
</dbReference>
<dbReference type="InterPro" id="IPR036869">
    <property type="entry name" value="J_dom_sf"/>
</dbReference>
<dbReference type="NCBIfam" id="TIGR00714">
    <property type="entry name" value="hscB"/>
    <property type="match status" value="1"/>
</dbReference>
<dbReference type="NCBIfam" id="NF001420">
    <property type="entry name" value="PRK00294.1"/>
    <property type="match status" value="1"/>
</dbReference>
<dbReference type="PANTHER" id="PTHR14021">
    <property type="entry name" value="IRON-SULFUR CLUSTER CO-CHAPERONE PROTEIN HSCB"/>
    <property type="match status" value="1"/>
</dbReference>
<dbReference type="PANTHER" id="PTHR14021:SF15">
    <property type="entry name" value="IRON-SULFUR CLUSTER CO-CHAPERONE PROTEIN HSCB"/>
    <property type="match status" value="1"/>
</dbReference>
<dbReference type="Pfam" id="PF00226">
    <property type="entry name" value="DnaJ"/>
    <property type="match status" value="1"/>
</dbReference>
<dbReference type="Pfam" id="PF07743">
    <property type="entry name" value="HSCB_C"/>
    <property type="match status" value="1"/>
</dbReference>
<dbReference type="SMART" id="SM00271">
    <property type="entry name" value="DnaJ"/>
    <property type="match status" value="1"/>
</dbReference>
<dbReference type="SUPFAM" id="SSF46565">
    <property type="entry name" value="Chaperone J-domain"/>
    <property type="match status" value="1"/>
</dbReference>
<dbReference type="SUPFAM" id="SSF47144">
    <property type="entry name" value="HSC20 (HSCB), C-terminal oligomerisation domain"/>
    <property type="match status" value="1"/>
</dbReference>
<dbReference type="PROSITE" id="PS50076">
    <property type="entry name" value="DNAJ_2"/>
    <property type="match status" value="1"/>
</dbReference>